<gene>
    <name evidence="1" type="primary">lipB</name>
    <name type="ordered locus">Amet_4426</name>
</gene>
<dbReference type="EC" id="2.3.1.181" evidence="1"/>
<dbReference type="EMBL" id="CP000724">
    <property type="protein sequence ID" value="ABR50498.1"/>
    <property type="status" value="ALT_INIT"/>
    <property type="molecule type" value="Genomic_DNA"/>
</dbReference>
<dbReference type="RefSeq" id="WP_041721228.1">
    <property type="nucleotide sequence ID" value="NC_009633.1"/>
</dbReference>
<dbReference type="SMR" id="A6TWD0"/>
<dbReference type="STRING" id="293826.Amet_4426"/>
<dbReference type="KEGG" id="amt:Amet_4426"/>
<dbReference type="eggNOG" id="COG0321">
    <property type="taxonomic scope" value="Bacteria"/>
</dbReference>
<dbReference type="HOGENOM" id="CLU_035168_1_3_9"/>
<dbReference type="OrthoDB" id="9787061at2"/>
<dbReference type="UniPathway" id="UPA00538">
    <property type="reaction ID" value="UER00592"/>
</dbReference>
<dbReference type="Proteomes" id="UP000001572">
    <property type="component" value="Chromosome"/>
</dbReference>
<dbReference type="GO" id="GO:0005737">
    <property type="term" value="C:cytoplasm"/>
    <property type="evidence" value="ECO:0007669"/>
    <property type="project" value="UniProtKB-SubCell"/>
</dbReference>
<dbReference type="GO" id="GO:0033819">
    <property type="term" value="F:lipoyl(octanoyl) transferase activity"/>
    <property type="evidence" value="ECO:0007669"/>
    <property type="project" value="UniProtKB-EC"/>
</dbReference>
<dbReference type="GO" id="GO:0036211">
    <property type="term" value="P:protein modification process"/>
    <property type="evidence" value="ECO:0007669"/>
    <property type="project" value="InterPro"/>
</dbReference>
<dbReference type="CDD" id="cd16444">
    <property type="entry name" value="LipB"/>
    <property type="match status" value="1"/>
</dbReference>
<dbReference type="Gene3D" id="3.30.930.10">
    <property type="entry name" value="Bira Bifunctional Protein, Domain 2"/>
    <property type="match status" value="1"/>
</dbReference>
<dbReference type="HAMAP" id="MF_00013">
    <property type="entry name" value="LipB"/>
    <property type="match status" value="1"/>
</dbReference>
<dbReference type="InterPro" id="IPR045864">
    <property type="entry name" value="aa-tRNA-synth_II/BPL/LPL"/>
</dbReference>
<dbReference type="InterPro" id="IPR004143">
    <property type="entry name" value="BPL_LPL_catalytic"/>
</dbReference>
<dbReference type="InterPro" id="IPR000544">
    <property type="entry name" value="Octanoyltransferase"/>
</dbReference>
<dbReference type="InterPro" id="IPR020605">
    <property type="entry name" value="Octanoyltransferase_CS"/>
</dbReference>
<dbReference type="NCBIfam" id="TIGR00214">
    <property type="entry name" value="lipB"/>
    <property type="match status" value="1"/>
</dbReference>
<dbReference type="NCBIfam" id="NF010925">
    <property type="entry name" value="PRK14345.1"/>
    <property type="match status" value="1"/>
</dbReference>
<dbReference type="PANTHER" id="PTHR10993:SF7">
    <property type="entry name" value="LIPOYLTRANSFERASE 2, MITOCHONDRIAL-RELATED"/>
    <property type="match status" value="1"/>
</dbReference>
<dbReference type="PANTHER" id="PTHR10993">
    <property type="entry name" value="OCTANOYLTRANSFERASE"/>
    <property type="match status" value="1"/>
</dbReference>
<dbReference type="Pfam" id="PF21948">
    <property type="entry name" value="LplA-B_cat"/>
    <property type="match status" value="1"/>
</dbReference>
<dbReference type="PIRSF" id="PIRSF016262">
    <property type="entry name" value="LPLase"/>
    <property type="match status" value="1"/>
</dbReference>
<dbReference type="SUPFAM" id="SSF55681">
    <property type="entry name" value="Class II aaRS and biotin synthetases"/>
    <property type="match status" value="1"/>
</dbReference>
<dbReference type="PROSITE" id="PS51733">
    <property type="entry name" value="BPL_LPL_CATALYTIC"/>
    <property type="match status" value="1"/>
</dbReference>
<dbReference type="PROSITE" id="PS01313">
    <property type="entry name" value="LIPB"/>
    <property type="match status" value="1"/>
</dbReference>
<accession>A6TWD0</accession>
<protein>
    <recommendedName>
        <fullName evidence="1">Octanoyltransferase</fullName>
        <ecNumber evidence="1">2.3.1.181</ecNumber>
    </recommendedName>
    <alternativeName>
        <fullName evidence="1">Lipoate-protein ligase B</fullName>
    </alternativeName>
    <alternativeName>
        <fullName evidence="1">Lipoyl/octanoyl transferase</fullName>
    </alternativeName>
    <alternativeName>
        <fullName evidence="1">Octanoyl-[acyl-carrier-protein]-protein N-octanoyltransferase</fullName>
    </alternativeName>
</protein>
<keyword id="KW-0012">Acyltransferase</keyword>
<keyword id="KW-0963">Cytoplasm</keyword>
<keyword id="KW-1185">Reference proteome</keyword>
<keyword id="KW-0808">Transferase</keyword>
<feature type="chain" id="PRO_0000321622" description="Octanoyltransferase">
    <location>
        <begin position="1"/>
        <end position="218"/>
    </location>
</feature>
<feature type="domain" description="BPL/LPL catalytic" evidence="2">
    <location>
        <begin position="30"/>
        <end position="213"/>
    </location>
</feature>
<feature type="active site" description="Acyl-thioester intermediate" evidence="1">
    <location>
        <position position="174"/>
    </location>
</feature>
<feature type="binding site" evidence="1">
    <location>
        <begin position="75"/>
        <end position="82"/>
    </location>
    <ligand>
        <name>substrate</name>
    </ligand>
</feature>
<feature type="binding site" evidence="1">
    <location>
        <begin position="143"/>
        <end position="145"/>
    </location>
    <ligand>
        <name>substrate</name>
    </ligand>
</feature>
<feature type="binding site" evidence="1">
    <location>
        <begin position="156"/>
        <end position="158"/>
    </location>
    <ligand>
        <name>substrate</name>
    </ligand>
</feature>
<feature type="site" description="Lowers pKa of active site Cys" evidence="1">
    <location>
        <position position="140"/>
    </location>
</feature>
<sequence>MHLNVVNLGRCEYEKALQVQIELLEKRQRGEIEDTLILVEHPPVITKGRHADETNIIGSEASLINHGIQLFNTDRGGDVTYHGPGQIVGYPIVNIRKSKIGVKKFVENLEEVLIRLLDEKYHITATRSSVNPGVWVGANKIAAIGLAVKRGVSMHGFALNVSTNLAHFKFLVPCGIADRGVTSIEEILGYPVDFHVANQHVLAYFSEVFNYDIIETVE</sequence>
<reference key="1">
    <citation type="journal article" date="2016" name="Genome Announc.">
        <title>Complete genome sequence of Alkaliphilus metalliredigens strain QYMF, an alkaliphilic and metal-reducing bacterium isolated from borax-contaminated leachate ponds.</title>
        <authorList>
            <person name="Hwang C."/>
            <person name="Copeland A."/>
            <person name="Lucas S."/>
            <person name="Lapidus A."/>
            <person name="Barry K."/>
            <person name="Detter J.C."/>
            <person name="Glavina Del Rio T."/>
            <person name="Hammon N."/>
            <person name="Israni S."/>
            <person name="Dalin E."/>
            <person name="Tice H."/>
            <person name="Pitluck S."/>
            <person name="Chertkov O."/>
            <person name="Brettin T."/>
            <person name="Bruce D."/>
            <person name="Han C."/>
            <person name="Schmutz J."/>
            <person name="Larimer F."/>
            <person name="Land M.L."/>
            <person name="Hauser L."/>
            <person name="Kyrpides N."/>
            <person name="Mikhailova N."/>
            <person name="Ye Q."/>
            <person name="Zhou J."/>
            <person name="Richardson P."/>
            <person name="Fields M.W."/>
        </authorList>
    </citation>
    <scope>NUCLEOTIDE SEQUENCE [LARGE SCALE GENOMIC DNA]</scope>
    <source>
        <strain>QYMF</strain>
    </source>
</reference>
<evidence type="ECO:0000255" key="1">
    <source>
        <dbReference type="HAMAP-Rule" id="MF_00013"/>
    </source>
</evidence>
<evidence type="ECO:0000255" key="2">
    <source>
        <dbReference type="PROSITE-ProRule" id="PRU01067"/>
    </source>
</evidence>
<evidence type="ECO:0000305" key="3"/>
<organism>
    <name type="scientific">Alkaliphilus metalliredigens (strain QYMF)</name>
    <dbReference type="NCBI Taxonomy" id="293826"/>
    <lineage>
        <taxon>Bacteria</taxon>
        <taxon>Bacillati</taxon>
        <taxon>Bacillota</taxon>
        <taxon>Clostridia</taxon>
        <taxon>Peptostreptococcales</taxon>
        <taxon>Natronincolaceae</taxon>
        <taxon>Alkaliphilus</taxon>
    </lineage>
</organism>
<comment type="function">
    <text evidence="1">Catalyzes the transfer of endogenously produced octanoic acid from octanoyl-acyl-carrier-protein onto the lipoyl domains of lipoate-dependent enzymes. Lipoyl-ACP can also act as a substrate although octanoyl-ACP is likely to be the physiological substrate.</text>
</comment>
<comment type="catalytic activity">
    <reaction evidence="1">
        <text>octanoyl-[ACP] + L-lysyl-[protein] = N(6)-octanoyl-L-lysyl-[protein] + holo-[ACP] + H(+)</text>
        <dbReference type="Rhea" id="RHEA:17665"/>
        <dbReference type="Rhea" id="RHEA-COMP:9636"/>
        <dbReference type="Rhea" id="RHEA-COMP:9685"/>
        <dbReference type="Rhea" id="RHEA-COMP:9752"/>
        <dbReference type="Rhea" id="RHEA-COMP:9928"/>
        <dbReference type="ChEBI" id="CHEBI:15378"/>
        <dbReference type="ChEBI" id="CHEBI:29969"/>
        <dbReference type="ChEBI" id="CHEBI:64479"/>
        <dbReference type="ChEBI" id="CHEBI:78463"/>
        <dbReference type="ChEBI" id="CHEBI:78809"/>
        <dbReference type="EC" id="2.3.1.181"/>
    </reaction>
</comment>
<comment type="pathway">
    <text evidence="1">Protein modification; protein lipoylation via endogenous pathway; protein N(6)-(lipoyl)lysine from octanoyl-[acyl-carrier-protein]: step 1/2.</text>
</comment>
<comment type="subcellular location">
    <subcellularLocation>
        <location evidence="1">Cytoplasm</location>
    </subcellularLocation>
</comment>
<comment type="miscellaneous">
    <text evidence="1">In the reaction, the free carboxyl group of octanoic acid is attached via an amide linkage to the epsilon-amino group of a specific lysine residue of lipoyl domains of lipoate-dependent enzymes.</text>
</comment>
<comment type="similarity">
    <text evidence="1">Belongs to the LipB family.</text>
</comment>
<comment type="sequence caution" evidence="3">
    <conflict type="erroneous initiation">
        <sequence resource="EMBL-CDS" id="ABR50498"/>
    </conflict>
    <text>Extended N-terminus.</text>
</comment>
<name>LIPB_ALKMQ</name>
<proteinExistence type="inferred from homology"/>